<organism>
    <name type="scientific">Escherichia coli O139:H28 (strain E24377A / ETEC)</name>
    <dbReference type="NCBI Taxonomy" id="331111"/>
    <lineage>
        <taxon>Bacteria</taxon>
        <taxon>Pseudomonadati</taxon>
        <taxon>Pseudomonadota</taxon>
        <taxon>Gammaproteobacteria</taxon>
        <taxon>Enterobacterales</taxon>
        <taxon>Enterobacteriaceae</taxon>
        <taxon>Escherichia</taxon>
    </lineage>
</organism>
<accession>A7ZL79</accession>
<gene>
    <name evidence="1" type="primary">trpB</name>
    <name type="ordered locus">EcE24377A_1460</name>
</gene>
<name>TRPB_ECO24</name>
<protein>
    <recommendedName>
        <fullName evidence="1">Tryptophan synthase beta chain</fullName>
        <ecNumber evidence="1">4.2.1.20</ecNumber>
    </recommendedName>
</protein>
<evidence type="ECO:0000255" key="1">
    <source>
        <dbReference type="HAMAP-Rule" id="MF_00133"/>
    </source>
</evidence>
<sequence length="397" mass="42983">MTTLLNPYFGEFGGMYVPQILMPALRQLEEAFVSAQKDPEFQAQFNDLLKNYAGRPTALTKCQNITAGTNTTLYLKREDLLHGGAHKTNQVLGQALLAKRMGKTEIIAETGAGQHGVASALASALLGLKCRIYMGAKDVERQSPNVFRMRLMGAEVIPVHSGSATLKDACNEALRDWSGSYETAHYMLGTAAGPHPYPTIVREFQRMIGEETKAQILEREGRLPDAVIACVGGGSNAIGMFADFINETNVGLIGVEPGGHGIETGEHGAPLKHGRVGIYFGMKAPMMQTEDGQIEESYSISAGLDFPSVGPQHAYLNSTGRADYVSITDDEALEAFKTLCLHEGIIPALESSHALAHALKMMRENPDKEQLLVVNLSGRGDKDIFTVHDILKARGEI</sequence>
<feature type="chain" id="PRO_1000057860" description="Tryptophan synthase beta chain">
    <location>
        <begin position="1"/>
        <end position="397"/>
    </location>
</feature>
<feature type="modified residue" description="N6-(pyridoxal phosphate)lysine" evidence="1">
    <location>
        <position position="87"/>
    </location>
</feature>
<proteinExistence type="inferred from homology"/>
<reference key="1">
    <citation type="journal article" date="2008" name="J. Bacteriol.">
        <title>The pangenome structure of Escherichia coli: comparative genomic analysis of E. coli commensal and pathogenic isolates.</title>
        <authorList>
            <person name="Rasko D.A."/>
            <person name="Rosovitz M.J."/>
            <person name="Myers G.S.A."/>
            <person name="Mongodin E.F."/>
            <person name="Fricke W.F."/>
            <person name="Gajer P."/>
            <person name="Crabtree J."/>
            <person name="Sebaihia M."/>
            <person name="Thomson N.R."/>
            <person name="Chaudhuri R."/>
            <person name="Henderson I.R."/>
            <person name="Sperandio V."/>
            <person name="Ravel J."/>
        </authorList>
    </citation>
    <scope>NUCLEOTIDE SEQUENCE [LARGE SCALE GENOMIC DNA]</scope>
    <source>
        <strain>E24377A / ETEC</strain>
    </source>
</reference>
<keyword id="KW-0028">Amino-acid biosynthesis</keyword>
<keyword id="KW-0057">Aromatic amino acid biosynthesis</keyword>
<keyword id="KW-0456">Lyase</keyword>
<keyword id="KW-0663">Pyridoxal phosphate</keyword>
<keyword id="KW-1185">Reference proteome</keyword>
<keyword id="KW-0822">Tryptophan biosynthesis</keyword>
<dbReference type="EC" id="4.2.1.20" evidence="1"/>
<dbReference type="EMBL" id="CP000800">
    <property type="protein sequence ID" value="ABV18964.1"/>
    <property type="molecule type" value="Genomic_DNA"/>
</dbReference>
<dbReference type="RefSeq" id="WP_000209520.1">
    <property type="nucleotide sequence ID" value="NC_009801.1"/>
</dbReference>
<dbReference type="SMR" id="A7ZL79"/>
<dbReference type="GeneID" id="75203373"/>
<dbReference type="KEGG" id="ecw:EcE24377A_1460"/>
<dbReference type="HOGENOM" id="CLU_016734_3_1_6"/>
<dbReference type="UniPathway" id="UPA00035">
    <property type="reaction ID" value="UER00044"/>
</dbReference>
<dbReference type="Proteomes" id="UP000001122">
    <property type="component" value="Chromosome"/>
</dbReference>
<dbReference type="GO" id="GO:0005737">
    <property type="term" value="C:cytoplasm"/>
    <property type="evidence" value="ECO:0007669"/>
    <property type="project" value="TreeGrafter"/>
</dbReference>
<dbReference type="GO" id="GO:0004834">
    <property type="term" value="F:tryptophan synthase activity"/>
    <property type="evidence" value="ECO:0007669"/>
    <property type="project" value="UniProtKB-UniRule"/>
</dbReference>
<dbReference type="CDD" id="cd06446">
    <property type="entry name" value="Trp-synth_B"/>
    <property type="match status" value="1"/>
</dbReference>
<dbReference type="FunFam" id="3.40.50.1100:FF:000001">
    <property type="entry name" value="Tryptophan synthase beta chain"/>
    <property type="match status" value="1"/>
</dbReference>
<dbReference type="FunFam" id="3.40.50.1100:FF:000004">
    <property type="entry name" value="Tryptophan synthase beta chain"/>
    <property type="match status" value="1"/>
</dbReference>
<dbReference type="Gene3D" id="3.40.50.1100">
    <property type="match status" value="2"/>
</dbReference>
<dbReference type="HAMAP" id="MF_00133">
    <property type="entry name" value="Trp_synth_beta"/>
    <property type="match status" value="1"/>
</dbReference>
<dbReference type="InterPro" id="IPR006653">
    <property type="entry name" value="Trp_synth_b_CS"/>
</dbReference>
<dbReference type="InterPro" id="IPR006654">
    <property type="entry name" value="Trp_synth_beta"/>
</dbReference>
<dbReference type="InterPro" id="IPR023026">
    <property type="entry name" value="Trp_synth_beta/beta-like"/>
</dbReference>
<dbReference type="InterPro" id="IPR001926">
    <property type="entry name" value="TrpB-like_PALP"/>
</dbReference>
<dbReference type="InterPro" id="IPR036052">
    <property type="entry name" value="TrpB-like_PALP_sf"/>
</dbReference>
<dbReference type="NCBIfam" id="TIGR00263">
    <property type="entry name" value="trpB"/>
    <property type="match status" value="1"/>
</dbReference>
<dbReference type="PANTHER" id="PTHR48077:SF3">
    <property type="entry name" value="TRYPTOPHAN SYNTHASE"/>
    <property type="match status" value="1"/>
</dbReference>
<dbReference type="PANTHER" id="PTHR48077">
    <property type="entry name" value="TRYPTOPHAN SYNTHASE-RELATED"/>
    <property type="match status" value="1"/>
</dbReference>
<dbReference type="Pfam" id="PF00291">
    <property type="entry name" value="PALP"/>
    <property type="match status" value="1"/>
</dbReference>
<dbReference type="PIRSF" id="PIRSF001413">
    <property type="entry name" value="Trp_syn_beta"/>
    <property type="match status" value="1"/>
</dbReference>
<dbReference type="SUPFAM" id="SSF53686">
    <property type="entry name" value="Tryptophan synthase beta subunit-like PLP-dependent enzymes"/>
    <property type="match status" value="1"/>
</dbReference>
<dbReference type="PROSITE" id="PS00168">
    <property type="entry name" value="TRP_SYNTHASE_BETA"/>
    <property type="match status" value="1"/>
</dbReference>
<comment type="function">
    <text evidence="1">The beta subunit is responsible for the synthesis of L-tryptophan from indole and L-serine.</text>
</comment>
<comment type="catalytic activity">
    <reaction evidence="1">
        <text>(1S,2R)-1-C-(indol-3-yl)glycerol 3-phosphate + L-serine = D-glyceraldehyde 3-phosphate + L-tryptophan + H2O</text>
        <dbReference type="Rhea" id="RHEA:10532"/>
        <dbReference type="ChEBI" id="CHEBI:15377"/>
        <dbReference type="ChEBI" id="CHEBI:33384"/>
        <dbReference type="ChEBI" id="CHEBI:57912"/>
        <dbReference type="ChEBI" id="CHEBI:58866"/>
        <dbReference type="ChEBI" id="CHEBI:59776"/>
        <dbReference type="EC" id="4.2.1.20"/>
    </reaction>
</comment>
<comment type="cofactor">
    <cofactor evidence="1">
        <name>pyridoxal 5'-phosphate</name>
        <dbReference type="ChEBI" id="CHEBI:597326"/>
    </cofactor>
</comment>
<comment type="pathway">
    <text evidence="1">Amino-acid biosynthesis; L-tryptophan biosynthesis; L-tryptophan from chorismate: step 5/5.</text>
</comment>
<comment type="subunit">
    <text evidence="1">Tetramer of two alpha and two beta chains.</text>
</comment>
<comment type="similarity">
    <text evidence="1">Belongs to the TrpB family.</text>
</comment>